<organism>
    <name type="scientific">Chelon auratus</name>
    <name type="common">Golden grey mullet</name>
    <name type="synonym">Liza aurata</name>
    <dbReference type="NCBI Taxonomy" id="48191"/>
    <lineage>
        <taxon>Eukaryota</taxon>
        <taxon>Metazoa</taxon>
        <taxon>Chordata</taxon>
        <taxon>Craniata</taxon>
        <taxon>Vertebrata</taxon>
        <taxon>Euteleostomi</taxon>
        <taxon>Actinopterygii</taxon>
        <taxon>Neopterygii</taxon>
        <taxon>Teleostei</taxon>
        <taxon>Neoteleostei</taxon>
        <taxon>Acanthomorphata</taxon>
        <taxon>Ovalentaria</taxon>
        <taxon>Mugilomorphae</taxon>
        <taxon>Mugilidae</taxon>
        <taxon>Chelon</taxon>
    </lineage>
</organism>
<protein>
    <recommendedName>
        <fullName>Rhodopsin</fullName>
    </recommendedName>
</protein>
<dbReference type="EMBL" id="Y18671">
    <property type="protein sequence ID" value="CAA77253.1"/>
    <property type="molecule type" value="mRNA"/>
</dbReference>
<dbReference type="SMR" id="Q9YGZ6"/>
<dbReference type="GlyCosmos" id="Q9YGZ6">
    <property type="glycosylation" value="3 sites, No reported glycans"/>
</dbReference>
<dbReference type="GO" id="GO:0016020">
    <property type="term" value="C:membrane"/>
    <property type="evidence" value="ECO:0000250"/>
    <property type="project" value="UniProtKB"/>
</dbReference>
<dbReference type="GO" id="GO:0097381">
    <property type="term" value="C:photoreceptor disc membrane"/>
    <property type="evidence" value="ECO:0000250"/>
    <property type="project" value="UniProtKB"/>
</dbReference>
<dbReference type="GO" id="GO:0005886">
    <property type="term" value="C:plasma membrane"/>
    <property type="evidence" value="ECO:0000250"/>
    <property type="project" value="UniProtKB"/>
</dbReference>
<dbReference type="GO" id="GO:0005502">
    <property type="term" value="F:11-cis retinal binding"/>
    <property type="evidence" value="ECO:0000250"/>
    <property type="project" value="UniProtKB"/>
</dbReference>
<dbReference type="GO" id="GO:0008020">
    <property type="term" value="F:G protein-coupled photoreceptor activity"/>
    <property type="evidence" value="ECO:0000250"/>
    <property type="project" value="UniProtKB"/>
</dbReference>
<dbReference type="GO" id="GO:0016038">
    <property type="term" value="P:absorption of visible light"/>
    <property type="evidence" value="ECO:0000250"/>
    <property type="project" value="UniProtKB"/>
</dbReference>
<dbReference type="GO" id="GO:0016056">
    <property type="term" value="P:G protein-coupled opsin signaling pathway"/>
    <property type="evidence" value="ECO:0000250"/>
    <property type="project" value="UniProtKB"/>
</dbReference>
<dbReference type="GO" id="GO:0007601">
    <property type="term" value="P:visual perception"/>
    <property type="evidence" value="ECO:0007669"/>
    <property type="project" value="UniProtKB-KW"/>
</dbReference>
<dbReference type="CDD" id="cd15080">
    <property type="entry name" value="7tmA_MWS_opsin"/>
    <property type="match status" value="1"/>
</dbReference>
<dbReference type="FunFam" id="1.20.1070.10:FF:000018">
    <property type="entry name" value="Rhodopsin"/>
    <property type="match status" value="1"/>
</dbReference>
<dbReference type="Gene3D" id="1.20.1070.10">
    <property type="entry name" value="Rhodopsin 7-helix transmembrane proteins"/>
    <property type="match status" value="1"/>
</dbReference>
<dbReference type="InterPro" id="IPR050125">
    <property type="entry name" value="GPCR_opsins"/>
</dbReference>
<dbReference type="InterPro" id="IPR000276">
    <property type="entry name" value="GPCR_Rhodpsn"/>
</dbReference>
<dbReference type="InterPro" id="IPR017452">
    <property type="entry name" value="GPCR_Rhodpsn_7TM"/>
</dbReference>
<dbReference type="InterPro" id="IPR001760">
    <property type="entry name" value="Opsin"/>
</dbReference>
<dbReference type="InterPro" id="IPR027430">
    <property type="entry name" value="Retinal_BS"/>
</dbReference>
<dbReference type="InterPro" id="IPR000732">
    <property type="entry name" value="Rhodopsin"/>
</dbReference>
<dbReference type="InterPro" id="IPR019477">
    <property type="entry name" value="Rhodopsin_N"/>
</dbReference>
<dbReference type="PANTHER" id="PTHR24240">
    <property type="entry name" value="OPSIN"/>
    <property type="match status" value="1"/>
</dbReference>
<dbReference type="Pfam" id="PF00001">
    <property type="entry name" value="7tm_1"/>
    <property type="match status" value="1"/>
</dbReference>
<dbReference type="Pfam" id="PF10413">
    <property type="entry name" value="Rhodopsin_N"/>
    <property type="match status" value="1"/>
</dbReference>
<dbReference type="PRINTS" id="PR00237">
    <property type="entry name" value="GPCRRHODOPSN"/>
</dbReference>
<dbReference type="PRINTS" id="PR00238">
    <property type="entry name" value="OPSIN"/>
</dbReference>
<dbReference type="PRINTS" id="PR00579">
    <property type="entry name" value="RHODOPSIN"/>
</dbReference>
<dbReference type="SUPFAM" id="SSF81321">
    <property type="entry name" value="Family A G protein-coupled receptor-like"/>
    <property type="match status" value="1"/>
</dbReference>
<dbReference type="PROSITE" id="PS00237">
    <property type="entry name" value="G_PROTEIN_RECEP_F1_1"/>
    <property type="match status" value="1"/>
</dbReference>
<dbReference type="PROSITE" id="PS50262">
    <property type="entry name" value="G_PROTEIN_RECEP_F1_2"/>
    <property type="match status" value="1"/>
</dbReference>
<dbReference type="PROSITE" id="PS00238">
    <property type="entry name" value="OPSIN"/>
    <property type="match status" value="1"/>
</dbReference>
<keyword id="KW-0966">Cell projection</keyword>
<keyword id="KW-0157">Chromophore</keyword>
<keyword id="KW-1015">Disulfide bond</keyword>
<keyword id="KW-0297">G-protein coupled receptor</keyword>
<keyword id="KW-0325">Glycoprotein</keyword>
<keyword id="KW-0449">Lipoprotein</keyword>
<keyword id="KW-0472">Membrane</keyword>
<keyword id="KW-0564">Palmitate</keyword>
<keyword id="KW-0597">Phosphoprotein</keyword>
<keyword id="KW-0600">Photoreceptor protein</keyword>
<keyword id="KW-0675">Receptor</keyword>
<keyword id="KW-0681">Retinal protein</keyword>
<keyword id="KW-0716">Sensory transduction</keyword>
<keyword id="KW-0807">Transducer</keyword>
<keyword id="KW-0812">Transmembrane</keyword>
<keyword id="KW-1133">Transmembrane helix</keyword>
<keyword id="KW-0844">Vision</keyword>
<evidence type="ECO:0000250" key="1">
    <source>
        <dbReference type="UniProtKB" id="P02699"/>
    </source>
</evidence>
<evidence type="ECO:0000250" key="2">
    <source>
        <dbReference type="UniProtKB" id="P08100"/>
    </source>
</evidence>
<evidence type="ECO:0000250" key="3">
    <source>
        <dbReference type="UniProtKB" id="P32309"/>
    </source>
</evidence>
<evidence type="ECO:0000250" key="4">
    <source>
        <dbReference type="UniProtKB" id="P35359"/>
    </source>
</evidence>
<evidence type="ECO:0000255" key="5"/>
<evidence type="ECO:0000255" key="6">
    <source>
        <dbReference type="PROSITE-ProRule" id="PRU00521"/>
    </source>
</evidence>
<evidence type="ECO:0000256" key="7">
    <source>
        <dbReference type="SAM" id="MobiDB-lite"/>
    </source>
</evidence>
<evidence type="ECO:0000305" key="8"/>
<feature type="chain" id="PRO_0000197682" description="Rhodopsin">
    <location>
        <begin position="1"/>
        <end position="353"/>
    </location>
</feature>
<feature type="topological domain" description="Extracellular" evidence="8">
    <location>
        <begin position="1"/>
        <end position="36"/>
    </location>
</feature>
<feature type="transmembrane region" description="Helical; Name=1" evidence="1">
    <location>
        <begin position="37"/>
        <end position="61"/>
    </location>
</feature>
<feature type="topological domain" description="Cytoplasmic" evidence="8">
    <location>
        <begin position="62"/>
        <end position="73"/>
    </location>
</feature>
<feature type="transmembrane region" description="Helical; Name=2" evidence="1">
    <location>
        <begin position="74"/>
        <end position="96"/>
    </location>
</feature>
<feature type="topological domain" description="Extracellular" evidence="8">
    <location>
        <begin position="97"/>
        <end position="110"/>
    </location>
</feature>
<feature type="transmembrane region" description="Helical; Name=3" evidence="1">
    <location>
        <begin position="111"/>
        <end position="133"/>
    </location>
</feature>
<feature type="topological domain" description="Cytoplasmic" evidence="8">
    <location>
        <begin position="134"/>
        <end position="152"/>
    </location>
</feature>
<feature type="transmembrane region" description="Helical; Name=4" evidence="1">
    <location>
        <begin position="153"/>
        <end position="173"/>
    </location>
</feature>
<feature type="topological domain" description="Extracellular" evidence="8">
    <location>
        <begin position="174"/>
        <end position="202"/>
    </location>
</feature>
<feature type="transmembrane region" description="Helical; Name=5" evidence="1">
    <location>
        <begin position="203"/>
        <end position="224"/>
    </location>
</feature>
<feature type="topological domain" description="Cytoplasmic" evidence="8">
    <location>
        <begin position="225"/>
        <end position="252"/>
    </location>
</feature>
<feature type="transmembrane region" description="Helical; Name=6" evidence="1">
    <location>
        <begin position="253"/>
        <end position="274"/>
    </location>
</feature>
<feature type="topological domain" description="Extracellular" evidence="8">
    <location>
        <begin position="275"/>
        <end position="286"/>
    </location>
</feature>
<feature type="transmembrane region" description="Helical; Name=7" evidence="1">
    <location>
        <begin position="287"/>
        <end position="308"/>
    </location>
</feature>
<feature type="topological domain" description="Cytoplasmic" evidence="8">
    <location>
        <begin position="309"/>
        <end position="353"/>
    </location>
</feature>
<feature type="region of interest" description="Disordered" evidence="7">
    <location>
        <begin position="329"/>
        <end position="353"/>
    </location>
</feature>
<feature type="short sequence motif" description="'Ionic lock' involved in activated form stabilization" evidence="1">
    <location>
        <begin position="134"/>
        <end position="136"/>
    </location>
</feature>
<feature type="compositionally biased region" description="Low complexity" evidence="7">
    <location>
        <begin position="334"/>
        <end position="353"/>
    </location>
</feature>
<feature type="site" description="Plays an important role in the conformation switch to the active conformation" evidence="1">
    <location>
        <position position="113"/>
    </location>
</feature>
<feature type="modified residue" description="N6-(retinylidene)lysine" evidence="1">
    <location>
        <position position="296"/>
    </location>
</feature>
<feature type="lipid moiety-binding region" description="S-palmitoyl cysteine" evidence="1">
    <location>
        <position position="322"/>
    </location>
</feature>
<feature type="lipid moiety-binding region" description="S-palmitoyl cysteine" evidence="1">
    <location>
        <position position="323"/>
    </location>
</feature>
<feature type="glycosylation site" description="N-linked (GlcNAc...) asparagine" evidence="5">
    <location>
        <position position="2"/>
    </location>
</feature>
<feature type="glycosylation site" description="N-linked (GlcNAc...) asparagine" evidence="5">
    <location>
        <position position="15"/>
    </location>
</feature>
<feature type="glycosylation site" description="N-linked (GlcNAc...) asparagine" evidence="5">
    <location>
        <position position="200"/>
    </location>
</feature>
<feature type="disulfide bond" evidence="6">
    <location>
        <begin position="110"/>
        <end position="187"/>
    </location>
</feature>
<accession>Q9YGZ6</accession>
<reference key="1">
    <citation type="submission" date="1999-01" db="EMBL/GenBank/DDBJ databases">
        <title>Comparative analysis of opsins in Mediterranian coastal fish.</title>
        <authorList>
            <person name="Archer S.N."/>
            <person name="Hirano J."/>
        </authorList>
    </citation>
    <scope>NUCLEOTIDE SEQUENCE [MRNA]</scope>
    <source>
        <tissue>Retina</tissue>
    </source>
</reference>
<sequence length="353" mass="39530">MNGTEGPYFYIPMVNTTGIVRSPYEYPQYYLVNPAAYAALGAYMFLLILIGFPVNFLTLYVTIEHKKLRTPLNYILLNLAVADLFMVFGGFTTTMYTSMHGYFVLGRLGCNLEGFFATLGGEIALWSLVVLAVERWMVVCKPISNFRFGEDHAIMGLAFTWVMAAACAVPPLVGWSRYIPEGMQCSCGIDYYTRAEGFNNESFVIYMFVCHFLIPLVVVFFCYGRLLCAVKEAAAAQQESETTQRAEREVSRMVVIMVVAFLVCWCPYAGVAWYIFTHQGSEFGPLFMTFPAFFAKSSSIYNPMIYICMNKQFRQCMITTLCCGKNPFEEEEGASTTSKTEASSVSSSSVSPA</sequence>
<proteinExistence type="evidence at transcript level"/>
<gene>
    <name type="primary">rho</name>
</gene>
<name>OPSD_CHEAU</name>
<comment type="function">
    <text evidence="1 2 3">Photoreceptor required for image-forming vision at low light intensity. While most salt water fish species use retinal as chromophore, most freshwater fish use 3-dehydroretinal, or a mixture of retinal and 3-dehydroretinal (By similarity). Light-induced isomerization of 11-cis to all-trans retinal triggers a conformational change that activates signaling via G-proteins. Subsequent receptor phosphorylation mediates displacement of the bound G-protein alpha subunit by arrestin and terminates signaling (By similarity).</text>
</comment>
<comment type="subcellular location">
    <subcellularLocation>
        <location evidence="2">Membrane</location>
        <topology evidence="2">Multi-pass membrane protein</topology>
    </subcellularLocation>
    <subcellularLocation>
        <location evidence="4">Cell projection</location>
        <location evidence="4">Cilium</location>
        <location evidence="4">Photoreceptor outer segment</location>
    </subcellularLocation>
    <text evidence="2">Synthesized in the inner segment (IS) of rod photoreceptor cells before vectorial transport to disk membranes in the rod outer segment (OS) photosensory cilia.</text>
</comment>
<comment type="PTM">
    <text evidence="1">Phosphorylated on some or all of the serine and threonine residues present in the C-terminal region.</text>
</comment>
<comment type="PTM">
    <text evidence="1">Contains one covalently linked retinal chromophore.</text>
</comment>
<comment type="similarity">
    <text evidence="6">Belongs to the G-protein coupled receptor 1 family. Opsin subfamily.</text>
</comment>